<gene>
    <name evidence="1" type="primary">ribH</name>
    <name type="ordered locus">SPCG_0189</name>
</gene>
<comment type="function">
    <text evidence="1">Catalyzes the formation of 6,7-dimethyl-8-ribityllumazine by condensation of 5-amino-6-(D-ribitylamino)uracil with 3,4-dihydroxy-2-butanone 4-phosphate. This is the penultimate step in the biosynthesis of riboflavin.</text>
</comment>
<comment type="catalytic activity">
    <reaction evidence="1">
        <text>(2S)-2-hydroxy-3-oxobutyl phosphate + 5-amino-6-(D-ribitylamino)uracil = 6,7-dimethyl-8-(1-D-ribityl)lumazine + phosphate + 2 H2O + H(+)</text>
        <dbReference type="Rhea" id="RHEA:26152"/>
        <dbReference type="ChEBI" id="CHEBI:15377"/>
        <dbReference type="ChEBI" id="CHEBI:15378"/>
        <dbReference type="ChEBI" id="CHEBI:15934"/>
        <dbReference type="ChEBI" id="CHEBI:43474"/>
        <dbReference type="ChEBI" id="CHEBI:58201"/>
        <dbReference type="ChEBI" id="CHEBI:58830"/>
        <dbReference type="EC" id="2.5.1.78"/>
    </reaction>
</comment>
<comment type="pathway">
    <text evidence="1">Cofactor biosynthesis; riboflavin biosynthesis; riboflavin from 2-hydroxy-3-oxobutyl phosphate and 5-amino-6-(D-ribitylamino)uracil: step 1/2.</text>
</comment>
<comment type="similarity">
    <text evidence="1">Belongs to the DMRL synthase family.</text>
</comment>
<keyword id="KW-0686">Riboflavin biosynthesis</keyword>
<keyword id="KW-0808">Transferase</keyword>
<dbReference type="EC" id="2.5.1.78" evidence="1"/>
<dbReference type="EMBL" id="CP001033">
    <property type="protein sequence ID" value="ACB89441.1"/>
    <property type="molecule type" value="Genomic_DNA"/>
</dbReference>
<dbReference type="SMR" id="B2IS11"/>
<dbReference type="KEGG" id="spw:SPCG_0189"/>
<dbReference type="HOGENOM" id="CLU_089358_1_1_9"/>
<dbReference type="UniPathway" id="UPA00275">
    <property type="reaction ID" value="UER00404"/>
</dbReference>
<dbReference type="GO" id="GO:0005829">
    <property type="term" value="C:cytosol"/>
    <property type="evidence" value="ECO:0007669"/>
    <property type="project" value="TreeGrafter"/>
</dbReference>
<dbReference type="GO" id="GO:0009349">
    <property type="term" value="C:riboflavin synthase complex"/>
    <property type="evidence" value="ECO:0007669"/>
    <property type="project" value="InterPro"/>
</dbReference>
<dbReference type="GO" id="GO:0000906">
    <property type="term" value="F:6,7-dimethyl-8-ribityllumazine synthase activity"/>
    <property type="evidence" value="ECO:0007669"/>
    <property type="project" value="UniProtKB-UniRule"/>
</dbReference>
<dbReference type="GO" id="GO:0009231">
    <property type="term" value="P:riboflavin biosynthetic process"/>
    <property type="evidence" value="ECO:0007669"/>
    <property type="project" value="UniProtKB-UniRule"/>
</dbReference>
<dbReference type="CDD" id="cd09209">
    <property type="entry name" value="Lumazine_synthase-I"/>
    <property type="match status" value="1"/>
</dbReference>
<dbReference type="FunFam" id="3.40.50.960:FF:000001">
    <property type="entry name" value="6,7-dimethyl-8-ribityllumazine synthase"/>
    <property type="match status" value="1"/>
</dbReference>
<dbReference type="Gene3D" id="3.40.50.960">
    <property type="entry name" value="Lumazine/riboflavin synthase"/>
    <property type="match status" value="1"/>
</dbReference>
<dbReference type="HAMAP" id="MF_00178">
    <property type="entry name" value="Lumazine_synth"/>
    <property type="match status" value="1"/>
</dbReference>
<dbReference type="InterPro" id="IPR034964">
    <property type="entry name" value="LS"/>
</dbReference>
<dbReference type="InterPro" id="IPR002180">
    <property type="entry name" value="LS/RS"/>
</dbReference>
<dbReference type="InterPro" id="IPR036467">
    <property type="entry name" value="LS/RS_sf"/>
</dbReference>
<dbReference type="NCBIfam" id="TIGR00114">
    <property type="entry name" value="lumazine-synth"/>
    <property type="match status" value="1"/>
</dbReference>
<dbReference type="NCBIfam" id="NF000812">
    <property type="entry name" value="PRK00061.1-4"/>
    <property type="match status" value="1"/>
</dbReference>
<dbReference type="PANTHER" id="PTHR21058:SF0">
    <property type="entry name" value="6,7-DIMETHYL-8-RIBITYLLUMAZINE SYNTHASE"/>
    <property type="match status" value="1"/>
</dbReference>
<dbReference type="PANTHER" id="PTHR21058">
    <property type="entry name" value="6,7-DIMETHYL-8-RIBITYLLUMAZINE SYNTHASE DMRL SYNTHASE LUMAZINE SYNTHASE"/>
    <property type="match status" value="1"/>
</dbReference>
<dbReference type="Pfam" id="PF00885">
    <property type="entry name" value="DMRL_synthase"/>
    <property type="match status" value="1"/>
</dbReference>
<dbReference type="SUPFAM" id="SSF52121">
    <property type="entry name" value="Lumazine synthase"/>
    <property type="match status" value="1"/>
</dbReference>
<reference key="1">
    <citation type="journal article" date="2009" name="BMC Genomics">
        <title>Genome evolution driven by host adaptations results in a more virulent and antimicrobial-resistant Streptococcus pneumoniae serotype 14.</title>
        <authorList>
            <person name="Ding F."/>
            <person name="Tang P."/>
            <person name="Hsu M.-H."/>
            <person name="Cui P."/>
            <person name="Hu S."/>
            <person name="Yu J."/>
            <person name="Chiu C.-H."/>
        </authorList>
    </citation>
    <scope>NUCLEOTIDE SEQUENCE [LARGE SCALE GENOMIC DNA]</scope>
    <source>
        <strain>CGSP14</strain>
    </source>
</reference>
<protein>
    <recommendedName>
        <fullName evidence="1">6,7-dimethyl-8-ribityllumazine synthase</fullName>
        <shortName evidence="1">DMRL synthase</shortName>
        <shortName evidence="1">LS</shortName>
        <shortName evidence="1">Lumazine synthase</shortName>
        <ecNumber evidence="1">2.5.1.78</ecNumber>
    </recommendedName>
</protein>
<organism>
    <name type="scientific">Streptococcus pneumoniae (strain CGSP14)</name>
    <dbReference type="NCBI Taxonomy" id="516950"/>
    <lineage>
        <taxon>Bacteria</taxon>
        <taxon>Bacillati</taxon>
        <taxon>Bacillota</taxon>
        <taxon>Bacilli</taxon>
        <taxon>Lactobacillales</taxon>
        <taxon>Streptococcaceae</taxon>
        <taxon>Streptococcus</taxon>
    </lineage>
</organism>
<proteinExistence type="inferred from homology"/>
<sequence length="155" mass="16752">MNTYEGNLVANNIKIGIVVARFNEFITSKLLSGALDNLKRENVNEKDIEVAWVPGAFEIPLIASKMAKSKKYDAIICLGAVIRGNTSHYDYVCSEVSKGIAQISLNSEIPVMFGVLTTDTIEQAIERAGTKAGNKGSECAQGAIEMVNLIRTLDA</sequence>
<accession>B2IS11</accession>
<feature type="chain" id="PRO_1000098238" description="6,7-dimethyl-8-ribityllumazine synthase">
    <location>
        <begin position="1"/>
        <end position="155"/>
    </location>
</feature>
<feature type="active site" description="Proton donor" evidence="1">
    <location>
        <position position="88"/>
    </location>
</feature>
<feature type="binding site" evidence="1">
    <location>
        <position position="22"/>
    </location>
    <ligand>
        <name>5-amino-6-(D-ribitylamino)uracil</name>
        <dbReference type="ChEBI" id="CHEBI:15934"/>
    </ligand>
</feature>
<feature type="binding site" evidence="1">
    <location>
        <begin position="56"/>
        <end position="58"/>
    </location>
    <ligand>
        <name>5-amino-6-(D-ribitylamino)uracil</name>
        <dbReference type="ChEBI" id="CHEBI:15934"/>
    </ligand>
</feature>
<feature type="binding site" evidence="1">
    <location>
        <begin position="80"/>
        <end position="82"/>
    </location>
    <ligand>
        <name>5-amino-6-(D-ribitylamino)uracil</name>
        <dbReference type="ChEBI" id="CHEBI:15934"/>
    </ligand>
</feature>
<feature type="binding site" evidence="1">
    <location>
        <begin position="85"/>
        <end position="86"/>
    </location>
    <ligand>
        <name>(2S)-2-hydroxy-3-oxobutyl phosphate</name>
        <dbReference type="ChEBI" id="CHEBI:58830"/>
    </ligand>
</feature>
<feature type="binding site" evidence="1">
    <location>
        <position position="113"/>
    </location>
    <ligand>
        <name>5-amino-6-(D-ribitylamino)uracil</name>
        <dbReference type="ChEBI" id="CHEBI:15934"/>
    </ligand>
</feature>
<feature type="binding site" evidence="1">
    <location>
        <position position="127"/>
    </location>
    <ligand>
        <name>(2S)-2-hydroxy-3-oxobutyl phosphate</name>
        <dbReference type="ChEBI" id="CHEBI:58830"/>
    </ligand>
</feature>
<evidence type="ECO:0000255" key="1">
    <source>
        <dbReference type="HAMAP-Rule" id="MF_00178"/>
    </source>
</evidence>
<name>RISB_STRPS</name>